<sequence>MIIDRVEVETINSFWKLELLKEVYGLISILPILTLLLGITIEVLVIVWLEREISASIQQRIGPEYAGPLGLLQAIADGTKLLFKEDILPSRGDISLFSIGPSIAVISVLLSFLVIPLGYHFVLADLSIGVFLWIAISSIAPIGLLMAGYSSNNKYSFLGGLRAAAQSISYEIPLTFCVLAISLLSNSLSTVDIVEAQSKYGFFGWNIWRQPIGFLVFLISSLAECERLPFDLPEAEEELVAGYQTEYSGIKYGLFYLVSYLNLLVSSLFVTVLYLGGWNLSIPYISFFDFFQMNKAVGILEMTMGIFITLTKAYLFLFISITIRWTLPRMRMDQLLNLGWKFLLPISLGNLLLTTSFQLVSL</sequence>
<proteinExistence type="inferred from homology"/>
<accession>Q95H43</accession>
<name>NU1C_WHEAT</name>
<geneLocation type="chloroplast"/>
<dbReference type="EC" id="7.1.1.-" evidence="2"/>
<dbReference type="EMBL" id="AB042240">
    <property type="protein sequence ID" value="BAB47090.1"/>
    <property type="molecule type" value="Genomic_DNA"/>
</dbReference>
<dbReference type="RefSeq" id="NP_114313.1">
    <property type="nucleotide sequence ID" value="NC_002762.1"/>
</dbReference>
<dbReference type="SMR" id="Q95H43"/>
<dbReference type="STRING" id="4565.Q95H43"/>
<dbReference type="PaxDb" id="4565-EPlTAEP00000010065"/>
<dbReference type="GeneID" id="803191"/>
<dbReference type="KEGG" id="taes:803191"/>
<dbReference type="eggNOG" id="KOG4770">
    <property type="taxonomic scope" value="Eukaryota"/>
</dbReference>
<dbReference type="Proteomes" id="UP000019116">
    <property type="component" value="Chloroplast"/>
</dbReference>
<dbReference type="ExpressionAtlas" id="Q95H43">
    <property type="expression patterns" value="baseline and differential"/>
</dbReference>
<dbReference type="GO" id="GO:0009535">
    <property type="term" value="C:chloroplast thylakoid membrane"/>
    <property type="evidence" value="ECO:0007669"/>
    <property type="project" value="UniProtKB-SubCell"/>
</dbReference>
<dbReference type="GO" id="GO:0016655">
    <property type="term" value="F:oxidoreductase activity, acting on NAD(P)H, quinone or similar compound as acceptor"/>
    <property type="evidence" value="ECO:0007669"/>
    <property type="project" value="UniProtKB-UniRule"/>
</dbReference>
<dbReference type="GO" id="GO:0048038">
    <property type="term" value="F:quinone binding"/>
    <property type="evidence" value="ECO:0007669"/>
    <property type="project" value="UniProtKB-KW"/>
</dbReference>
<dbReference type="GO" id="GO:0009060">
    <property type="term" value="P:aerobic respiration"/>
    <property type="evidence" value="ECO:0000318"/>
    <property type="project" value="GO_Central"/>
</dbReference>
<dbReference type="GO" id="GO:0019684">
    <property type="term" value="P:photosynthesis, light reaction"/>
    <property type="evidence" value="ECO:0007669"/>
    <property type="project" value="UniProtKB-UniRule"/>
</dbReference>
<dbReference type="HAMAP" id="MF_01350">
    <property type="entry name" value="NDH1_NuoH"/>
    <property type="match status" value="1"/>
</dbReference>
<dbReference type="InterPro" id="IPR001694">
    <property type="entry name" value="NADH_UbQ_OxRdtase_su1/FPO"/>
</dbReference>
<dbReference type="InterPro" id="IPR018086">
    <property type="entry name" value="NADH_UbQ_OxRdtase_su1_CS"/>
</dbReference>
<dbReference type="NCBIfam" id="NF004741">
    <property type="entry name" value="PRK06076.1-2"/>
    <property type="match status" value="1"/>
</dbReference>
<dbReference type="PANTHER" id="PTHR11432">
    <property type="entry name" value="NADH DEHYDROGENASE SUBUNIT 1"/>
    <property type="match status" value="1"/>
</dbReference>
<dbReference type="PANTHER" id="PTHR11432:SF3">
    <property type="entry name" value="NADH-UBIQUINONE OXIDOREDUCTASE CHAIN 1"/>
    <property type="match status" value="1"/>
</dbReference>
<dbReference type="Pfam" id="PF00146">
    <property type="entry name" value="NADHdh"/>
    <property type="match status" value="1"/>
</dbReference>
<dbReference type="PROSITE" id="PS00667">
    <property type="entry name" value="COMPLEX1_ND1_1"/>
    <property type="match status" value="1"/>
</dbReference>
<dbReference type="PROSITE" id="PS00668">
    <property type="entry name" value="COMPLEX1_ND1_2"/>
    <property type="match status" value="1"/>
</dbReference>
<reference key="1">
    <citation type="journal article" date="2000" name="Plant Mol. Biol. Rep.">
        <title>Chinese spring wheat (Triticum aestivum L.) chloroplast genome: complete sequence and contig clones.</title>
        <authorList>
            <person name="Ogihara Y."/>
            <person name="Isono K."/>
            <person name="Kojima T."/>
            <person name="Endo A."/>
            <person name="Hanaoka M."/>
            <person name="Shiina T."/>
            <person name="Terachi T."/>
            <person name="Utsugi S."/>
            <person name="Murata M."/>
            <person name="Mori N."/>
            <person name="Takumi S."/>
            <person name="Ikeo K."/>
            <person name="Gojobori T."/>
            <person name="Murai R."/>
            <person name="Murai K."/>
            <person name="Matsuoka Y."/>
            <person name="Ohnishi Y."/>
            <person name="Tajiri H."/>
            <person name="Tsunewaki K."/>
        </authorList>
    </citation>
    <scope>NUCLEOTIDE SEQUENCE [LARGE SCALE GENOMIC DNA]</scope>
    <source>
        <strain>cv. Chinese Spring</strain>
    </source>
</reference>
<feature type="chain" id="PRO_0000117517" description="NAD(P)H-quinone oxidoreductase subunit 1, chloroplastic">
    <location>
        <begin position="1"/>
        <end position="362"/>
    </location>
</feature>
<feature type="transmembrane region" description="Helical" evidence="2">
    <location>
        <begin position="29"/>
        <end position="49"/>
    </location>
</feature>
<feature type="transmembrane region" description="Helical" evidence="2">
    <location>
        <begin position="103"/>
        <end position="123"/>
    </location>
</feature>
<feature type="transmembrane region" description="Helical" evidence="2">
    <location>
        <begin position="128"/>
        <end position="148"/>
    </location>
</feature>
<feature type="transmembrane region" description="Helical" evidence="2">
    <location>
        <begin position="164"/>
        <end position="184"/>
    </location>
</feature>
<feature type="transmembrane region" description="Helical" evidence="2">
    <location>
        <begin position="202"/>
        <end position="222"/>
    </location>
</feature>
<feature type="transmembrane region" description="Helical" evidence="2">
    <location>
        <begin position="247"/>
        <end position="267"/>
    </location>
</feature>
<feature type="transmembrane region" description="Helical" evidence="2">
    <location>
        <begin position="303"/>
        <end position="323"/>
    </location>
</feature>
<feature type="transmembrane region" description="Helical" evidence="2">
    <location>
        <begin position="335"/>
        <end position="355"/>
    </location>
</feature>
<gene>
    <name evidence="2" type="primary">ndhA</name>
</gene>
<protein>
    <recommendedName>
        <fullName evidence="2">NAD(P)H-quinone oxidoreductase subunit 1, chloroplastic</fullName>
        <ecNumber evidence="2">7.1.1.-</ecNumber>
    </recommendedName>
    <alternativeName>
        <fullName evidence="2">NAD(P)H dehydrogenase subunit 1</fullName>
        <shortName evidence="2">NDH subunit 1</shortName>
    </alternativeName>
    <alternativeName>
        <fullName evidence="2">NADH-plastoquinone oxidoreductase subunit 1</fullName>
    </alternativeName>
</protein>
<organism>
    <name type="scientific">Triticum aestivum</name>
    <name type="common">Wheat</name>
    <dbReference type="NCBI Taxonomy" id="4565"/>
    <lineage>
        <taxon>Eukaryota</taxon>
        <taxon>Viridiplantae</taxon>
        <taxon>Streptophyta</taxon>
        <taxon>Embryophyta</taxon>
        <taxon>Tracheophyta</taxon>
        <taxon>Spermatophyta</taxon>
        <taxon>Magnoliopsida</taxon>
        <taxon>Liliopsida</taxon>
        <taxon>Poales</taxon>
        <taxon>Poaceae</taxon>
        <taxon>BOP clade</taxon>
        <taxon>Pooideae</taxon>
        <taxon>Triticodae</taxon>
        <taxon>Triticeae</taxon>
        <taxon>Triticinae</taxon>
        <taxon>Triticum</taxon>
    </lineage>
</organism>
<keyword id="KW-0150">Chloroplast</keyword>
<keyword id="KW-0472">Membrane</keyword>
<keyword id="KW-0520">NAD</keyword>
<keyword id="KW-0521">NADP</keyword>
<keyword id="KW-0934">Plastid</keyword>
<keyword id="KW-0618">Plastoquinone</keyword>
<keyword id="KW-0874">Quinone</keyword>
<keyword id="KW-1185">Reference proteome</keyword>
<keyword id="KW-0691">RNA editing</keyword>
<keyword id="KW-0793">Thylakoid</keyword>
<keyword id="KW-1278">Translocase</keyword>
<keyword id="KW-0812">Transmembrane</keyword>
<keyword id="KW-1133">Transmembrane helix</keyword>
<comment type="function">
    <text evidence="2">NDH shuttles electrons from NAD(P)H:plastoquinone, via FMN and iron-sulfur (Fe-S) centers, to quinones in the photosynthetic chain and possibly in a chloroplast respiratory chain. The immediate electron acceptor for the enzyme in this species is believed to be plastoquinone. Couples the redox reaction to proton translocation, and thus conserves the redox energy in a proton gradient.</text>
</comment>
<comment type="catalytic activity">
    <reaction evidence="2">
        <text>a plastoquinone + NADH + (n+1) H(+)(in) = a plastoquinol + NAD(+) + n H(+)(out)</text>
        <dbReference type="Rhea" id="RHEA:42608"/>
        <dbReference type="Rhea" id="RHEA-COMP:9561"/>
        <dbReference type="Rhea" id="RHEA-COMP:9562"/>
        <dbReference type="ChEBI" id="CHEBI:15378"/>
        <dbReference type="ChEBI" id="CHEBI:17757"/>
        <dbReference type="ChEBI" id="CHEBI:57540"/>
        <dbReference type="ChEBI" id="CHEBI:57945"/>
        <dbReference type="ChEBI" id="CHEBI:62192"/>
    </reaction>
</comment>
<comment type="catalytic activity">
    <reaction evidence="2">
        <text>a plastoquinone + NADPH + (n+1) H(+)(in) = a plastoquinol + NADP(+) + n H(+)(out)</text>
        <dbReference type="Rhea" id="RHEA:42612"/>
        <dbReference type="Rhea" id="RHEA-COMP:9561"/>
        <dbReference type="Rhea" id="RHEA-COMP:9562"/>
        <dbReference type="ChEBI" id="CHEBI:15378"/>
        <dbReference type="ChEBI" id="CHEBI:17757"/>
        <dbReference type="ChEBI" id="CHEBI:57783"/>
        <dbReference type="ChEBI" id="CHEBI:58349"/>
        <dbReference type="ChEBI" id="CHEBI:62192"/>
    </reaction>
</comment>
<comment type="subunit">
    <text evidence="2">NDH is composed of at least 16 different subunits, 5 of which are encoded in the nucleus.</text>
</comment>
<comment type="subcellular location">
    <subcellularLocation>
        <location evidence="2">Plastid</location>
        <location evidence="2">Chloroplast thylakoid membrane</location>
        <topology evidence="2">Multi-pass membrane protein</topology>
    </subcellularLocation>
</comment>
<comment type="RNA editing">
    <location>
        <position position="158" evidence="1"/>
    </location>
    <location>
        <position position="188" evidence="1"/>
    </location>
    <location>
        <position position="357" evidence="1"/>
    </location>
</comment>
<comment type="similarity">
    <text evidence="2">Belongs to the complex I subunit 1 family.</text>
</comment>
<evidence type="ECO:0000250" key="1"/>
<evidence type="ECO:0000255" key="2">
    <source>
        <dbReference type="HAMAP-Rule" id="MF_01350"/>
    </source>
</evidence>